<dbReference type="EMBL" id="AP008934">
    <property type="protein sequence ID" value="BAE19115.1"/>
    <property type="molecule type" value="Genomic_DNA"/>
</dbReference>
<dbReference type="SMR" id="Q49VU5"/>
<dbReference type="KEGG" id="ssp:SSP1970"/>
<dbReference type="PATRIC" id="fig|342451.11.peg.1964"/>
<dbReference type="eggNOG" id="COG2199">
    <property type="taxonomic scope" value="Bacteria"/>
</dbReference>
<dbReference type="HOGENOM" id="CLU_000445_11_1_9"/>
<dbReference type="OrthoDB" id="9759607at2"/>
<dbReference type="Proteomes" id="UP000006371">
    <property type="component" value="Chromosome"/>
</dbReference>
<dbReference type="GO" id="GO:0005886">
    <property type="term" value="C:plasma membrane"/>
    <property type="evidence" value="ECO:0007669"/>
    <property type="project" value="UniProtKB-SubCell"/>
</dbReference>
<dbReference type="GO" id="GO:0052621">
    <property type="term" value="F:diguanylate cyclase activity"/>
    <property type="evidence" value="ECO:0007669"/>
    <property type="project" value="TreeGrafter"/>
</dbReference>
<dbReference type="GO" id="GO:0000155">
    <property type="term" value="F:phosphorelay sensor kinase activity"/>
    <property type="evidence" value="ECO:0007669"/>
    <property type="project" value="InterPro"/>
</dbReference>
<dbReference type="GO" id="GO:0043709">
    <property type="term" value="P:cell adhesion involved in single-species biofilm formation"/>
    <property type="evidence" value="ECO:0007669"/>
    <property type="project" value="TreeGrafter"/>
</dbReference>
<dbReference type="GO" id="GO:0071555">
    <property type="term" value="P:cell wall organization"/>
    <property type="evidence" value="ECO:0007669"/>
    <property type="project" value="InterPro"/>
</dbReference>
<dbReference type="GO" id="GO:1902201">
    <property type="term" value="P:negative regulation of bacterial-type flagellum-dependent cell motility"/>
    <property type="evidence" value="ECO:0007669"/>
    <property type="project" value="TreeGrafter"/>
</dbReference>
<dbReference type="CDD" id="cd01949">
    <property type="entry name" value="GGDEF"/>
    <property type="match status" value="1"/>
</dbReference>
<dbReference type="FunFam" id="3.30.70.270:FF:000001">
    <property type="entry name" value="Diguanylate cyclase domain protein"/>
    <property type="match status" value="1"/>
</dbReference>
<dbReference type="Gene3D" id="3.30.70.270">
    <property type="match status" value="1"/>
</dbReference>
<dbReference type="InterPro" id="IPR050469">
    <property type="entry name" value="Diguanylate_Cyclase"/>
</dbReference>
<dbReference type="InterPro" id="IPR000160">
    <property type="entry name" value="GGDEF_dom"/>
</dbReference>
<dbReference type="InterPro" id="IPR029787">
    <property type="entry name" value="Nucleotide_cyclase"/>
</dbReference>
<dbReference type="InterPro" id="IPR043128">
    <property type="entry name" value="Rev_trsase/Diguanyl_cyclase"/>
</dbReference>
<dbReference type="InterPro" id="IPR011620">
    <property type="entry name" value="Sig_transdc_His_kinase_LytS_TM"/>
</dbReference>
<dbReference type="NCBIfam" id="TIGR00254">
    <property type="entry name" value="GGDEF"/>
    <property type="match status" value="1"/>
</dbReference>
<dbReference type="PANTHER" id="PTHR45138:SF9">
    <property type="entry name" value="DIGUANYLATE CYCLASE DGCM-RELATED"/>
    <property type="match status" value="1"/>
</dbReference>
<dbReference type="PANTHER" id="PTHR45138">
    <property type="entry name" value="REGULATORY COMPONENTS OF SENSORY TRANSDUCTION SYSTEM"/>
    <property type="match status" value="1"/>
</dbReference>
<dbReference type="Pfam" id="PF07694">
    <property type="entry name" value="5TM-5TMR_LYT"/>
    <property type="match status" value="1"/>
</dbReference>
<dbReference type="Pfam" id="PF00990">
    <property type="entry name" value="GGDEF"/>
    <property type="match status" value="1"/>
</dbReference>
<dbReference type="SMART" id="SM00267">
    <property type="entry name" value="GGDEF"/>
    <property type="match status" value="1"/>
</dbReference>
<dbReference type="SUPFAM" id="SSF55073">
    <property type="entry name" value="Nucleotide cyclase"/>
    <property type="match status" value="1"/>
</dbReference>
<dbReference type="PROSITE" id="PS50887">
    <property type="entry name" value="GGDEF"/>
    <property type="match status" value="1"/>
</dbReference>
<evidence type="ECO:0000255" key="1"/>
<evidence type="ECO:0000255" key="2">
    <source>
        <dbReference type="PROSITE-ProRule" id="PRU00095"/>
    </source>
</evidence>
<evidence type="ECO:0000305" key="3"/>
<reference key="1">
    <citation type="journal article" date="2005" name="Proc. Natl. Acad. Sci. U.S.A.">
        <title>Whole genome sequence of Staphylococcus saprophyticus reveals the pathogenesis of uncomplicated urinary tract infection.</title>
        <authorList>
            <person name="Kuroda M."/>
            <person name="Yamashita A."/>
            <person name="Hirakawa H."/>
            <person name="Kumano M."/>
            <person name="Morikawa K."/>
            <person name="Higashide M."/>
            <person name="Maruyama A."/>
            <person name="Inose Y."/>
            <person name="Matoba K."/>
            <person name="Toh H."/>
            <person name="Kuhara S."/>
            <person name="Hattori M."/>
            <person name="Ohta T."/>
        </authorList>
    </citation>
    <scope>NUCLEOTIDE SEQUENCE [LARGE SCALE GENOMIC DNA]</scope>
    <source>
        <strain>ATCC 15305 / DSM 20229 / NCIMB 8711 / NCTC 7292 / S-41</strain>
    </source>
</reference>
<feature type="chain" id="PRO_0000286964" description="Uncharacterized membrane protein SSP1970">
    <location>
        <begin position="1"/>
        <end position="356"/>
    </location>
</feature>
<feature type="transmembrane region" description="Helical" evidence="1">
    <location>
        <begin position="2"/>
        <end position="22"/>
    </location>
</feature>
<feature type="transmembrane region" description="Helical" evidence="1">
    <location>
        <begin position="36"/>
        <end position="56"/>
    </location>
</feature>
<feature type="transmembrane region" description="Helical" evidence="1">
    <location>
        <begin position="77"/>
        <end position="97"/>
    </location>
</feature>
<feature type="transmembrane region" description="Helical" evidence="1">
    <location>
        <begin position="99"/>
        <end position="119"/>
    </location>
</feature>
<feature type="transmembrane region" description="Helical" evidence="1">
    <location>
        <begin position="124"/>
        <end position="144"/>
    </location>
</feature>
<feature type="transmembrane region" description="Helical" evidence="1">
    <location>
        <begin position="154"/>
        <end position="174"/>
    </location>
</feature>
<feature type="domain" description="GGDEF" evidence="2">
    <location>
        <begin position="218"/>
        <end position="353"/>
    </location>
</feature>
<keyword id="KW-1003">Cell membrane</keyword>
<keyword id="KW-0472">Membrane</keyword>
<keyword id="KW-1185">Reference proteome</keyword>
<keyword id="KW-0812">Transmembrane</keyword>
<keyword id="KW-1133">Transmembrane helix</keyword>
<organism>
    <name type="scientific">Staphylococcus saprophyticus subsp. saprophyticus (strain ATCC 15305 / DSM 20229 / NCIMB 8711 / NCTC 7292 / S-41)</name>
    <dbReference type="NCBI Taxonomy" id="342451"/>
    <lineage>
        <taxon>Bacteria</taxon>
        <taxon>Bacillati</taxon>
        <taxon>Bacillota</taxon>
        <taxon>Bacilli</taxon>
        <taxon>Bacillales</taxon>
        <taxon>Staphylococcaceae</taxon>
        <taxon>Staphylococcus</taxon>
    </lineage>
</organism>
<proteinExistence type="predicted"/>
<protein>
    <recommendedName>
        <fullName>Uncharacterized membrane protein SSP1970</fullName>
    </recommendedName>
</protein>
<comment type="subcellular location">
    <subcellularLocation>
        <location evidence="3">Cell membrane</location>
        <topology evidence="3">Multi-pass membrane protein</topology>
    </subcellularLocation>
</comment>
<sequence length="356" mass="40507">MFEAIIYNISVTVAGIYLFHRLQYSENRIMVFSKEYVTVLMTIVALLLSAYPVPIFNEYTLYLSFVPILFLGRYTNMFYTVLSAFIVGLVNVLIGDYTIITAMIFIVIAGIIGAIGPFLKQSDIISLQILNVIALVIFAILSLISPYYEITEVLFLIPISFVLTITSSITFVDIWHFFSLVNRYENEDKVDYLTGLGNVKEFDRHLNETARLSEENNQSLGLLLIDIDGFKDVNDMYSHKSGDAVLRQVAQLLKNYVPQQFSIYRNGGEEFSIVLYDYTLDQCVKLSESIRGGVEQSTFHLPNKEVIKLSVSIGVGYLTTDDYKSQRKVFKIADDMLHMAKNEGRNQVMFNPIVKL</sequence>
<name>Y1970_STAS1</name>
<gene>
    <name type="ordered locus">SSP1970</name>
</gene>
<accession>Q49VU5</accession>